<organism>
    <name type="scientific">Neisseria meningitidis serogroup B (strain ATCC BAA-335 / MC58)</name>
    <dbReference type="NCBI Taxonomy" id="122586"/>
    <lineage>
        <taxon>Bacteria</taxon>
        <taxon>Pseudomonadati</taxon>
        <taxon>Pseudomonadota</taxon>
        <taxon>Betaproteobacteria</taxon>
        <taxon>Neisseriales</taxon>
        <taxon>Neisseriaceae</taxon>
        <taxon>Neisseria</taxon>
    </lineage>
</organism>
<dbReference type="EMBL" id="AE002098">
    <property type="protein sequence ID" value="AAF40613.1"/>
    <property type="molecule type" value="Genomic_DNA"/>
</dbReference>
<dbReference type="PIR" id="E81232">
    <property type="entry name" value="E81232"/>
</dbReference>
<dbReference type="RefSeq" id="NP_273213.1">
    <property type="nucleotide sequence ID" value="NC_003112.2"/>
</dbReference>
<dbReference type="RefSeq" id="WP_002216244.1">
    <property type="nucleotide sequence ID" value="NC_003112.2"/>
</dbReference>
<dbReference type="SMR" id="P66408"/>
<dbReference type="FunCoup" id="P66408">
    <property type="interactions" value="541"/>
</dbReference>
<dbReference type="STRING" id="122586.NMB0155"/>
<dbReference type="PaxDb" id="122586-NMB0155"/>
<dbReference type="GeneID" id="93387230"/>
<dbReference type="KEGG" id="nme:NMB0155"/>
<dbReference type="PATRIC" id="fig|122586.8.peg.196"/>
<dbReference type="HOGENOM" id="CLU_139869_0_1_4"/>
<dbReference type="InParanoid" id="P66408"/>
<dbReference type="OrthoDB" id="9810484at2"/>
<dbReference type="Proteomes" id="UP000000425">
    <property type="component" value="Chromosome"/>
</dbReference>
<dbReference type="GO" id="GO:0005737">
    <property type="term" value="C:cytoplasm"/>
    <property type="evidence" value="ECO:0007669"/>
    <property type="project" value="UniProtKB-ARBA"/>
</dbReference>
<dbReference type="GO" id="GO:0015935">
    <property type="term" value="C:small ribosomal subunit"/>
    <property type="evidence" value="ECO:0000318"/>
    <property type="project" value="GO_Central"/>
</dbReference>
<dbReference type="GO" id="GO:0019843">
    <property type="term" value="F:rRNA binding"/>
    <property type="evidence" value="ECO:0007669"/>
    <property type="project" value="UniProtKB-UniRule"/>
</dbReference>
<dbReference type="GO" id="GO:0003735">
    <property type="term" value="F:structural constituent of ribosome"/>
    <property type="evidence" value="ECO:0000318"/>
    <property type="project" value="GO_Central"/>
</dbReference>
<dbReference type="GO" id="GO:0006412">
    <property type="term" value="P:translation"/>
    <property type="evidence" value="ECO:0000318"/>
    <property type="project" value="GO_Central"/>
</dbReference>
<dbReference type="FunFam" id="1.10.287.1480:FF:000001">
    <property type="entry name" value="30S ribosomal protein S14"/>
    <property type="match status" value="1"/>
</dbReference>
<dbReference type="Gene3D" id="1.10.287.1480">
    <property type="match status" value="1"/>
</dbReference>
<dbReference type="HAMAP" id="MF_00537">
    <property type="entry name" value="Ribosomal_uS14_1"/>
    <property type="match status" value="1"/>
</dbReference>
<dbReference type="InterPro" id="IPR001209">
    <property type="entry name" value="Ribosomal_uS14"/>
</dbReference>
<dbReference type="InterPro" id="IPR023036">
    <property type="entry name" value="Ribosomal_uS14_bac/plastid"/>
</dbReference>
<dbReference type="NCBIfam" id="NF006477">
    <property type="entry name" value="PRK08881.1"/>
    <property type="match status" value="1"/>
</dbReference>
<dbReference type="PANTHER" id="PTHR19836">
    <property type="entry name" value="30S RIBOSOMAL PROTEIN S14"/>
    <property type="match status" value="1"/>
</dbReference>
<dbReference type="PANTHER" id="PTHR19836:SF19">
    <property type="entry name" value="SMALL RIBOSOMAL SUBUNIT PROTEIN US14M"/>
    <property type="match status" value="1"/>
</dbReference>
<dbReference type="Pfam" id="PF00253">
    <property type="entry name" value="Ribosomal_S14"/>
    <property type="match status" value="1"/>
</dbReference>
<dbReference type="SUPFAM" id="SSF57716">
    <property type="entry name" value="Glucocorticoid receptor-like (DNA-binding domain)"/>
    <property type="match status" value="1"/>
</dbReference>
<sequence>MAKKALINRDLKRQALAKKYAAKRAAIKAVINDSNATEEERFEARLRFQSIPRNAAPVRQRRRCALTGRPRGTFRKFGLGRIKIREIAMRGEIPGVVKASW</sequence>
<proteinExistence type="inferred from homology"/>
<keyword id="KW-1185">Reference proteome</keyword>
<keyword id="KW-0687">Ribonucleoprotein</keyword>
<keyword id="KW-0689">Ribosomal protein</keyword>
<keyword id="KW-0694">RNA-binding</keyword>
<keyword id="KW-0699">rRNA-binding</keyword>
<evidence type="ECO:0000255" key="1">
    <source>
        <dbReference type="HAMAP-Rule" id="MF_00537"/>
    </source>
</evidence>
<evidence type="ECO:0000305" key="2"/>
<feature type="chain" id="PRO_0000130915" description="Small ribosomal subunit protein uS14">
    <location>
        <begin position="1"/>
        <end position="101"/>
    </location>
</feature>
<comment type="function">
    <text evidence="1">Binds 16S rRNA, required for the assembly of 30S particles and may also be responsible for determining the conformation of the 16S rRNA at the A site.</text>
</comment>
<comment type="subunit">
    <text evidence="1">Part of the 30S ribosomal subunit. Contacts proteins S3 and S10.</text>
</comment>
<comment type="similarity">
    <text evidence="1">Belongs to the universal ribosomal protein uS14 family.</text>
</comment>
<gene>
    <name evidence="1" type="primary">rpsN</name>
    <name type="ordered locus">NMB0155</name>
</gene>
<reference key="1">
    <citation type="journal article" date="2000" name="Science">
        <title>Complete genome sequence of Neisseria meningitidis serogroup B strain MC58.</title>
        <authorList>
            <person name="Tettelin H."/>
            <person name="Saunders N.J."/>
            <person name="Heidelberg J.F."/>
            <person name="Jeffries A.C."/>
            <person name="Nelson K.E."/>
            <person name="Eisen J.A."/>
            <person name="Ketchum K.A."/>
            <person name="Hood D.W."/>
            <person name="Peden J.F."/>
            <person name="Dodson R.J."/>
            <person name="Nelson W.C."/>
            <person name="Gwinn M.L."/>
            <person name="DeBoy R.T."/>
            <person name="Peterson J.D."/>
            <person name="Hickey E.K."/>
            <person name="Haft D.H."/>
            <person name="Salzberg S.L."/>
            <person name="White O."/>
            <person name="Fleischmann R.D."/>
            <person name="Dougherty B.A."/>
            <person name="Mason T.M."/>
            <person name="Ciecko A."/>
            <person name="Parksey D.S."/>
            <person name="Blair E."/>
            <person name="Cittone H."/>
            <person name="Clark E.B."/>
            <person name="Cotton M.D."/>
            <person name="Utterback T.R."/>
            <person name="Khouri H.M."/>
            <person name="Qin H."/>
            <person name="Vamathevan J.J."/>
            <person name="Gill J."/>
            <person name="Scarlato V."/>
            <person name="Masignani V."/>
            <person name="Pizza M."/>
            <person name="Grandi G."/>
            <person name="Sun L."/>
            <person name="Smith H.O."/>
            <person name="Fraser C.M."/>
            <person name="Moxon E.R."/>
            <person name="Rappuoli R."/>
            <person name="Venter J.C."/>
        </authorList>
    </citation>
    <scope>NUCLEOTIDE SEQUENCE [LARGE SCALE GENOMIC DNA]</scope>
    <source>
        <strain>ATCC BAA-335 / MC58</strain>
    </source>
</reference>
<name>RS14_NEIMB</name>
<protein>
    <recommendedName>
        <fullName evidence="1">Small ribosomal subunit protein uS14</fullName>
    </recommendedName>
    <alternativeName>
        <fullName evidence="2">30S ribosomal protein S14</fullName>
    </alternativeName>
</protein>
<accession>P66408</accession>
<accession>Q9JQR3</accession>